<reference key="1">
    <citation type="journal article" date="2003" name="Genome Res.">
        <title>Comparative genome analysis of Vibrio vulnificus, a marine pathogen.</title>
        <authorList>
            <person name="Chen C.-Y."/>
            <person name="Wu K.-M."/>
            <person name="Chang Y.-C."/>
            <person name="Chang C.-H."/>
            <person name="Tsai H.-C."/>
            <person name="Liao T.-L."/>
            <person name="Liu Y.-M."/>
            <person name="Chen H.-J."/>
            <person name="Shen A.B.-T."/>
            <person name="Li J.-C."/>
            <person name="Su T.-L."/>
            <person name="Shao C.-P."/>
            <person name="Lee C.-T."/>
            <person name="Hor L.-I."/>
            <person name="Tsai S.-F."/>
        </authorList>
    </citation>
    <scope>NUCLEOTIDE SEQUENCE [LARGE SCALE GENOMIC DNA]</scope>
    <source>
        <strain>YJ016</strain>
    </source>
</reference>
<name>CAPP_VIBVY</name>
<feature type="chain" id="PRO_0000166650" description="Phosphoenolpyruvate carboxylase">
    <location>
        <begin position="1"/>
        <end position="877"/>
    </location>
</feature>
<feature type="active site" evidence="1">
    <location>
        <position position="138"/>
    </location>
</feature>
<feature type="active site" evidence="1">
    <location>
        <position position="544"/>
    </location>
</feature>
<comment type="function">
    <text evidence="1">Forms oxaloacetate, a four-carbon dicarboxylic acid source for the tricarboxylic acid cycle.</text>
</comment>
<comment type="catalytic activity">
    <reaction evidence="1">
        <text>oxaloacetate + phosphate = phosphoenolpyruvate + hydrogencarbonate</text>
        <dbReference type="Rhea" id="RHEA:28370"/>
        <dbReference type="ChEBI" id="CHEBI:16452"/>
        <dbReference type="ChEBI" id="CHEBI:17544"/>
        <dbReference type="ChEBI" id="CHEBI:43474"/>
        <dbReference type="ChEBI" id="CHEBI:58702"/>
        <dbReference type="EC" id="4.1.1.31"/>
    </reaction>
</comment>
<comment type="cofactor">
    <cofactor evidence="1">
        <name>Mg(2+)</name>
        <dbReference type="ChEBI" id="CHEBI:18420"/>
    </cofactor>
</comment>
<comment type="similarity">
    <text evidence="1">Belongs to the PEPCase type 1 family.</text>
</comment>
<comment type="sequence caution" evidence="2">
    <conflict type="erroneous initiation">
        <sequence resource="EMBL-CDS" id="BAC95768"/>
    </conflict>
</comment>
<accession>Q7MH68</accession>
<gene>
    <name evidence="1" type="primary">ppc</name>
    <name type="ordered locus">VV3004</name>
</gene>
<evidence type="ECO:0000255" key="1">
    <source>
        <dbReference type="HAMAP-Rule" id="MF_00595"/>
    </source>
</evidence>
<evidence type="ECO:0000305" key="2"/>
<proteinExistence type="inferred from homology"/>
<protein>
    <recommendedName>
        <fullName evidence="1">Phosphoenolpyruvate carboxylase</fullName>
        <shortName evidence="1">PEPC</shortName>
        <shortName evidence="1">PEPCase</shortName>
        <ecNumber evidence="1">4.1.1.31</ecNumber>
    </recommendedName>
</protein>
<dbReference type="EC" id="4.1.1.31" evidence="1"/>
<dbReference type="EMBL" id="BA000037">
    <property type="protein sequence ID" value="BAC95768.1"/>
    <property type="status" value="ALT_INIT"/>
    <property type="molecule type" value="Genomic_DNA"/>
</dbReference>
<dbReference type="RefSeq" id="WP_011151288.1">
    <property type="nucleotide sequence ID" value="NC_005139.1"/>
</dbReference>
<dbReference type="SMR" id="Q7MH68"/>
<dbReference type="STRING" id="672.VV93_v1c27320"/>
<dbReference type="KEGG" id="vvy:VV3004"/>
<dbReference type="PATRIC" id="fig|196600.6.peg.2981"/>
<dbReference type="eggNOG" id="COG2352">
    <property type="taxonomic scope" value="Bacteria"/>
</dbReference>
<dbReference type="HOGENOM" id="CLU_006557_2_0_6"/>
<dbReference type="Proteomes" id="UP000002675">
    <property type="component" value="Chromosome I"/>
</dbReference>
<dbReference type="GO" id="GO:0005829">
    <property type="term" value="C:cytosol"/>
    <property type="evidence" value="ECO:0007669"/>
    <property type="project" value="TreeGrafter"/>
</dbReference>
<dbReference type="GO" id="GO:0000287">
    <property type="term" value="F:magnesium ion binding"/>
    <property type="evidence" value="ECO:0007669"/>
    <property type="project" value="UniProtKB-UniRule"/>
</dbReference>
<dbReference type="GO" id="GO:0008964">
    <property type="term" value="F:phosphoenolpyruvate carboxylase activity"/>
    <property type="evidence" value="ECO:0007669"/>
    <property type="project" value="UniProtKB-UniRule"/>
</dbReference>
<dbReference type="GO" id="GO:0015977">
    <property type="term" value="P:carbon fixation"/>
    <property type="evidence" value="ECO:0007669"/>
    <property type="project" value="UniProtKB-UniRule"/>
</dbReference>
<dbReference type="GO" id="GO:0006107">
    <property type="term" value="P:oxaloacetate metabolic process"/>
    <property type="evidence" value="ECO:0007669"/>
    <property type="project" value="UniProtKB-UniRule"/>
</dbReference>
<dbReference type="GO" id="GO:0006099">
    <property type="term" value="P:tricarboxylic acid cycle"/>
    <property type="evidence" value="ECO:0007669"/>
    <property type="project" value="InterPro"/>
</dbReference>
<dbReference type="FunFam" id="1.20.1440.90:FF:000002">
    <property type="entry name" value="Phosphoenolpyruvate carboxylase"/>
    <property type="match status" value="1"/>
</dbReference>
<dbReference type="Gene3D" id="1.20.1440.90">
    <property type="entry name" value="Phosphoenolpyruvate/pyruvate domain"/>
    <property type="match status" value="1"/>
</dbReference>
<dbReference type="HAMAP" id="MF_00595">
    <property type="entry name" value="PEPcase_type1"/>
    <property type="match status" value="1"/>
</dbReference>
<dbReference type="InterPro" id="IPR021135">
    <property type="entry name" value="PEP_COase"/>
</dbReference>
<dbReference type="InterPro" id="IPR022805">
    <property type="entry name" value="PEP_COase_bac/pln-type"/>
</dbReference>
<dbReference type="InterPro" id="IPR018129">
    <property type="entry name" value="PEP_COase_Lys_AS"/>
</dbReference>
<dbReference type="InterPro" id="IPR033129">
    <property type="entry name" value="PEPCASE_His_AS"/>
</dbReference>
<dbReference type="InterPro" id="IPR015813">
    <property type="entry name" value="Pyrv/PenolPyrv_kinase-like_dom"/>
</dbReference>
<dbReference type="NCBIfam" id="NF000584">
    <property type="entry name" value="PRK00009.1"/>
    <property type="match status" value="1"/>
</dbReference>
<dbReference type="PANTHER" id="PTHR30523">
    <property type="entry name" value="PHOSPHOENOLPYRUVATE CARBOXYLASE"/>
    <property type="match status" value="1"/>
</dbReference>
<dbReference type="PANTHER" id="PTHR30523:SF6">
    <property type="entry name" value="PHOSPHOENOLPYRUVATE CARBOXYLASE"/>
    <property type="match status" value="1"/>
</dbReference>
<dbReference type="Pfam" id="PF00311">
    <property type="entry name" value="PEPcase"/>
    <property type="match status" value="1"/>
</dbReference>
<dbReference type="PRINTS" id="PR00150">
    <property type="entry name" value="PEPCARBXLASE"/>
</dbReference>
<dbReference type="SUPFAM" id="SSF51621">
    <property type="entry name" value="Phosphoenolpyruvate/pyruvate domain"/>
    <property type="match status" value="1"/>
</dbReference>
<dbReference type="PROSITE" id="PS00781">
    <property type="entry name" value="PEPCASE_1"/>
    <property type="match status" value="1"/>
</dbReference>
<dbReference type="PROSITE" id="PS00393">
    <property type="entry name" value="PEPCASE_2"/>
    <property type="match status" value="1"/>
</dbReference>
<keyword id="KW-0120">Carbon dioxide fixation</keyword>
<keyword id="KW-0456">Lyase</keyword>
<keyword id="KW-0460">Magnesium</keyword>
<sequence>MNEKYAALKSNVSMLGHLLGNTIQEAHGDEILEKVETIRKLSKSARAGNQADRNNLIEEIKSLPDEQLTPVARAFNQFLNLTNIAEQYHTISRHCDAHVCEPDAINTLFAKLGQNGINKLDTAQAIRELNIELVLTAHPTEITRRTMINKLVKINECLSKLELSDLSYKERHKTEKRLEQLIAQSWHSDVIRKQRPTPLDEAKWGFAVVENSLWEAVPDFLRELDEKLKDYLDQGLPIDARPVHFSSWMGGDRDGNPFVTHTVTREVLLLSRWKAADLYLKDINELISELSMTKCNDTVRQLAGEDEHEPYRAILKQLRTLLSDTKEILDAKINGQKLAVKAPLQSVEQLWDPLFACYQSLRECGMSMIAEGSLLDTLRRVKAFGVHLVRLDIRQESTRHADVLSELTRYLGIGDYNHWSEQDKIAFLTNELASKRPLLPRDWQPSEPVKEVLDTCKIIAAQSREAFGAYVISMAKTASDVLAVHLLLQESGCPYRMDVCPLFETLDDLNNAEAVIKQLMSIDLYRGFIQNHQMVMIGYSDSAKDAGVMAAGWAQYHAMEALVNVAEQEGIELTLFHGRGGTIGRGGAPAHAALLSQPPKSLKGGLRVTEQGEMIRFKLGLPDVAVNSFNMYASAILEANLLPPPEPKQEWRDLMEVLSQVSCEAYRSVVRGEPDFVPYFRQATPELELGKLPLGSRPAKRNPNGGVESLRAIPWIFSWSQNRLLLPAWLGAGEAIQYSIDKGHQALLEEMCREWPFFSTRLGMLEMVYLKCNSEISRYYDERLADKSLLPLGDRLRDQLQSDIKAVLNVENNENLMQSDPWGQESIRLRNIYIEPLNMLQAELLYRTRQAGVVSEELEEALMVTIAGIAAGMRNTG</sequence>
<organism>
    <name type="scientific">Vibrio vulnificus (strain YJ016)</name>
    <dbReference type="NCBI Taxonomy" id="196600"/>
    <lineage>
        <taxon>Bacteria</taxon>
        <taxon>Pseudomonadati</taxon>
        <taxon>Pseudomonadota</taxon>
        <taxon>Gammaproteobacteria</taxon>
        <taxon>Vibrionales</taxon>
        <taxon>Vibrionaceae</taxon>
        <taxon>Vibrio</taxon>
    </lineage>
</organism>